<reference key="1">
    <citation type="submission" date="2002-12" db="EMBL/GenBank/DDBJ databases">
        <title>Complete genome sequence of Vibrio vulnificus CMCP6.</title>
        <authorList>
            <person name="Rhee J.H."/>
            <person name="Kim S.Y."/>
            <person name="Chung S.S."/>
            <person name="Kim J.J."/>
            <person name="Moon Y.H."/>
            <person name="Jeong H."/>
            <person name="Choy H.E."/>
        </authorList>
    </citation>
    <scope>NUCLEOTIDE SEQUENCE [LARGE SCALE GENOMIC DNA]</scope>
    <source>
        <strain>CMCP6</strain>
    </source>
</reference>
<reference key="2">
    <citation type="journal article" date="2011" name="Mol. Syst. Biol.">
        <title>Integrative genome-scale metabolic analysis of Vibrio vulnificus for drug targeting and discovery.</title>
        <authorList>
            <person name="Kim H.U."/>
            <person name="Kim S.Y."/>
            <person name="Jeong H."/>
            <person name="Kim T.Y."/>
            <person name="Kim J.J."/>
            <person name="Choy H.E."/>
            <person name="Yi K.Y."/>
            <person name="Rhee J.H."/>
            <person name="Lee S.Y."/>
        </authorList>
    </citation>
    <scope>SEQUENCE REVISION TO 373-380</scope>
    <source>
        <strain>CMCP6</strain>
    </source>
</reference>
<gene>
    <name evidence="1" type="primary">tyrS2</name>
    <name type="ordered locus">VV1_1683</name>
</gene>
<accession>Q8DBX3</accession>
<protein>
    <recommendedName>
        <fullName evidence="1">Tyrosine--tRNA ligase 2</fullName>
        <ecNumber evidence="1">6.1.1.1</ecNumber>
    </recommendedName>
    <alternativeName>
        <fullName evidence="1">Tyrosyl-tRNA synthetase 2</fullName>
        <shortName evidence="1">TyrRS 2</shortName>
    </alternativeName>
</protein>
<feature type="chain" id="PRO_0000236778" description="Tyrosine--tRNA ligase 2">
    <location>
        <begin position="1"/>
        <end position="395"/>
    </location>
</feature>
<feature type="domain" description="S4 RNA-binding" evidence="1">
    <location>
        <begin position="334"/>
        <end position="395"/>
    </location>
</feature>
<feature type="short sequence motif" description="'HIGH' region">
    <location>
        <begin position="42"/>
        <end position="51"/>
    </location>
</feature>
<feature type="short sequence motif" description="'KMSKS' region">
    <location>
        <begin position="226"/>
        <end position="230"/>
    </location>
</feature>
<feature type="binding site" evidence="1">
    <location>
        <position position="229"/>
    </location>
    <ligand>
        <name>ATP</name>
        <dbReference type="ChEBI" id="CHEBI:30616"/>
    </ligand>
</feature>
<organism>
    <name type="scientific">Vibrio vulnificus (strain CMCP6)</name>
    <dbReference type="NCBI Taxonomy" id="216895"/>
    <lineage>
        <taxon>Bacteria</taxon>
        <taxon>Pseudomonadati</taxon>
        <taxon>Pseudomonadota</taxon>
        <taxon>Gammaproteobacteria</taxon>
        <taxon>Vibrionales</taxon>
        <taxon>Vibrionaceae</taxon>
        <taxon>Vibrio</taxon>
    </lineage>
</organism>
<keyword id="KW-0030">Aminoacyl-tRNA synthetase</keyword>
<keyword id="KW-0067">ATP-binding</keyword>
<keyword id="KW-0963">Cytoplasm</keyword>
<keyword id="KW-0436">Ligase</keyword>
<keyword id="KW-0547">Nucleotide-binding</keyword>
<keyword id="KW-0648">Protein biosynthesis</keyword>
<keyword id="KW-0694">RNA-binding</keyword>
<comment type="function">
    <text evidence="1">Catalyzes the attachment of tyrosine to tRNA(Tyr) in a two-step reaction: tyrosine is first activated by ATP to form Tyr-AMP and then transferred to the acceptor end of tRNA(Tyr).</text>
</comment>
<comment type="catalytic activity">
    <reaction evidence="1">
        <text>tRNA(Tyr) + L-tyrosine + ATP = L-tyrosyl-tRNA(Tyr) + AMP + diphosphate + H(+)</text>
        <dbReference type="Rhea" id="RHEA:10220"/>
        <dbReference type="Rhea" id="RHEA-COMP:9706"/>
        <dbReference type="Rhea" id="RHEA-COMP:9707"/>
        <dbReference type="ChEBI" id="CHEBI:15378"/>
        <dbReference type="ChEBI" id="CHEBI:30616"/>
        <dbReference type="ChEBI" id="CHEBI:33019"/>
        <dbReference type="ChEBI" id="CHEBI:58315"/>
        <dbReference type="ChEBI" id="CHEBI:78442"/>
        <dbReference type="ChEBI" id="CHEBI:78536"/>
        <dbReference type="ChEBI" id="CHEBI:456215"/>
        <dbReference type="EC" id="6.1.1.1"/>
    </reaction>
</comment>
<comment type="subunit">
    <text evidence="1">Homodimer.</text>
</comment>
<comment type="subcellular location">
    <subcellularLocation>
        <location evidence="1">Cytoplasm</location>
    </subcellularLocation>
</comment>
<comment type="similarity">
    <text evidence="1">Belongs to the class-I aminoacyl-tRNA synthetase family. TyrS type 2 subfamily.</text>
</comment>
<sequence length="395" mass="43834">MASIEAALAEIKRGVEELIPEEELIAKLKEGRPLRIKLGADPTAPDIHLGHTVILNKLRAFQDLGHDVTFLIGDFTGMVGDPTGKNSTRPPLTREDVLRNAETYKQQVFKILDPAKTKIQFNSEWLSELGAEGMIRLAANQTVARMLERDDFKKRYAGGQPIAIHEFMYPLLQGYDSVAMETDVELGGTDQKFNLLMGRELQKANGQKPQVVLMMPLLVGLDGEKKMSKSANNYIGVSEAPSEMFGKIMSISDDLMWSYYELLSFRPLEELAQFKADVAAGKNPRDIKVLLAKEIIARFHSEADADAAEQEFVNRFAKNQIPDEMPEFTFAAGTPMANLLKEAELCSSTSEAMRMVKQGAAKMDGEKVEDAKAEPAVGTYVFQVGKRKFARITIA</sequence>
<dbReference type="EC" id="6.1.1.1" evidence="1"/>
<dbReference type="EMBL" id="AE016795">
    <property type="protein sequence ID" value="AAO10099.2"/>
    <property type="molecule type" value="Genomic_DNA"/>
</dbReference>
<dbReference type="SMR" id="Q8DBX3"/>
<dbReference type="KEGG" id="vvu:VV1_1683"/>
<dbReference type="HOGENOM" id="CLU_024003_5_0_6"/>
<dbReference type="Proteomes" id="UP000002275">
    <property type="component" value="Chromosome 1"/>
</dbReference>
<dbReference type="GO" id="GO:0005829">
    <property type="term" value="C:cytosol"/>
    <property type="evidence" value="ECO:0007669"/>
    <property type="project" value="TreeGrafter"/>
</dbReference>
<dbReference type="GO" id="GO:0005524">
    <property type="term" value="F:ATP binding"/>
    <property type="evidence" value="ECO:0007669"/>
    <property type="project" value="UniProtKB-UniRule"/>
</dbReference>
<dbReference type="GO" id="GO:0003723">
    <property type="term" value="F:RNA binding"/>
    <property type="evidence" value="ECO:0007669"/>
    <property type="project" value="UniProtKB-KW"/>
</dbReference>
<dbReference type="GO" id="GO:0004831">
    <property type="term" value="F:tyrosine-tRNA ligase activity"/>
    <property type="evidence" value="ECO:0007669"/>
    <property type="project" value="UniProtKB-UniRule"/>
</dbReference>
<dbReference type="GO" id="GO:0006437">
    <property type="term" value="P:tyrosyl-tRNA aminoacylation"/>
    <property type="evidence" value="ECO:0007669"/>
    <property type="project" value="UniProtKB-UniRule"/>
</dbReference>
<dbReference type="CDD" id="cd00165">
    <property type="entry name" value="S4"/>
    <property type="match status" value="1"/>
</dbReference>
<dbReference type="CDD" id="cd00805">
    <property type="entry name" value="TyrRS_core"/>
    <property type="match status" value="1"/>
</dbReference>
<dbReference type="FunFam" id="1.10.240.10:FF:000006">
    <property type="entry name" value="Tyrosine--tRNA ligase"/>
    <property type="match status" value="1"/>
</dbReference>
<dbReference type="FunFam" id="3.10.290.10:FF:000022">
    <property type="entry name" value="Tyrosine--tRNA ligase"/>
    <property type="match status" value="1"/>
</dbReference>
<dbReference type="FunFam" id="3.40.50.620:FF:000061">
    <property type="entry name" value="Tyrosine--tRNA ligase"/>
    <property type="match status" value="1"/>
</dbReference>
<dbReference type="Gene3D" id="3.40.50.620">
    <property type="entry name" value="HUPs"/>
    <property type="match status" value="1"/>
</dbReference>
<dbReference type="Gene3D" id="3.10.290.10">
    <property type="entry name" value="RNA-binding S4 domain"/>
    <property type="match status" value="1"/>
</dbReference>
<dbReference type="Gene3D" id="1.10.240.10">
    <property type="entry name" value="Tyrosyl-Transfer RNA Synthetase"/>
    <property type="match status" value="1"/>
</dbReference>
<dbReference type="HAMAP" id="MF_02007">
    <property type="entry name" value="Tyr_tRNA_synth_type2"/>
    <property type="match status" value="1"/>
</dbReference>
<dbReference type="InterPro" id="IPR001412">
    <property type="entry name" value="aa-tRNA-synth_I_CS"/>
</dbReference>
<dbReference type="InterPro" id="IPR002305">
    <property type="entry name" value="aa-tRNA-synth_Ic"/>
</dbReference>
<dbReference type="InterPro" id="IPR014729">
    <property type="entry name" value="Rossmann-like_a/b/a_fold"/>
</dbReference>
<dbReference type="InterPro" id="IPR036986">
    <property type="entry name" value="S4_RNA-bd_sf"/>
</dbReference>
<dbReference type="InterPro" id="IPR002307">
    <property type="entry name" value="Tyr-tRNA-ligase"/>
</dbReference>
<dbReference type="InterPro" id="IPR024088">
    <property type="entry name" value="Tyr-tRNA-ligase_bac-type"/>
</dbReference>
<dbReference type="InterPro" id="IPR024108">
    <property type="entry name" value="Tyr-tRNA-ligase_bac_2"/>
</dbReference>
<dbReference type="NCBIfam" id="TIGR00234">
    <property type="entry name" value="tyrS"/>
    <property type="match status" value="1"/>
</dbReference>
<dbReference type="PANTHER" id="PTHR11766:SF1">
    <property type="entry name" value="TYROSINE--TRNA LIGASE"/>
    <property type="match status" value="1"/>
</dbReference>
<dbReference type="PANTHER" id="PTHR11766">
    <property type="entry name" value="TYROSYL-TRNA SYNTHETASE"/>
    <property type="match status" value="1"/>
</dbReference>
<dbReference type="Pfam" id="PF00579">
    <property type="entry name" value="tRNA-synt_1b"/>
    <property type="match status" value="1"/>
</dbReference>
<dbReference type="PRINTS" id="PR01040">
    <property type="entry name" value="TRNASYNTHTYR"/>
</dbReference>
<dbReference type="SUPFAM" id="SSF55174">
    <property type="entry name" value="Alpha-L RNA-binding motif"/>
    <property type="match status" value="1"/>
</dbReference>
<dbReference type="SUPFAM" id="SSF52374">
    <property type="entry name" value="Nucleotidylyl transferase"/>
    <property type="match status" value="1"/>
</dbReference>
<dbReference type="PROSITE" id="PS00178">
    <property type="entry name" value="AA_TRNA_LIGASE_I"/>
    <property type="match status" value="1"/>
</dbReference>
<dbReference type="PROSITE" id="PS50889">
    <property type="entry name" value="S4"/>
    <property type="match status" value="1"/>
</dbReference>
<name>SYY2_VIBVU</name>
<proteinExistence type="inferred from homology"/>
<evidence type="ECO:0000255" key="1">
    <source>
        <dbReference type="HAMAP-Rule" id="MF_02007"/>
    </source>
</evidence>